<proteinExistence type="evidence at protein level"/>
<dbReference type="PIR" id="S27049">
    <property type="entry name" value="S27049"/>
</dbReference>
<dbReference type="SMR" id="P29624"/>
<dbReference type="GO" id="GO:0072562">
    <property type="term" value="C:blood microparticle"/>
    <property type="evidence" value="ECO:0007669"/>
    <property type="project" value="TreeGrafter"/>
</dbReference>
<dbReference type="GO" id="GO:0031838">
    <property type="term" value="C:haptoglobin-hemoglobin complex"/>
    <property type="evidence" value="ECO:0007669"/>
    <property type="project" value="TreeGrafter"/>
</dbReference>
<dbReference type="GO" id="GO:0005833">
    <property type="term" value="C:hemoglobin complex"/>
    <property type="evidence" value="ECO:0007669"/>
    <property type="project" value="InterPro"/>
</dbReference>
<dbReference type="GO" id="GO:0031720">
    <property type="term" value="F:haptoglobin binding"/>
    <property type="evidence" value="ECO:0007669"/>
    <property type="project" value="TreeGrafter"/>
</dbReference>
<dbReference type="GO" id="GO:0020037">
    <property type="term" value="F:heme binding"/>
    <property type="evidence" value="ECO:0007669"/>
    <property type="project" value="InterPro"/>
</dbReference>
<dbReference type="GO" id="GO:0005506">
    <property type="term" value="F:iron ion binding"/>
    <property type="evidence" value="ECO:0007669"/>
    <property type="project" value="InterPro"/>
</dbReference>
<dbReference type="GO" id="GO:0043177">
    <property type="term" value="F:organic acid binding"/>
    <property type="evidence" value="ECO:0007669"/>
    <property type="project" value="TreeGrafter"/>
</dbReference>
<dbReference type="GO" id="GO:0019825">
    <property type="term" value="F:oxygen binding"/>
    <property type="evidence" value="ECO:0007669"/>
    <property type="project" value="InterPro"/>
</dbReference>
<dbReference type="GO" id="GO:0005344">
    <property type="term" value="F:oxygen carrier activity"/>
    <property type="evidence" value="ECO:0007669"/>
    <property type="project" value="UniProtKB-KW"/>
</dbReference>
<dbReference type="GO" id="GO:0004601">
    <property type="term" value="F:peroxidase activity"/>
    <property type="evidence" value="ECO:0007669"/>
    <property type="project" value="TreeGrafter"/>
</dbReference>
<dbReference type="GO" id="GO:0042744">
    <property type="term" value="P:hydrogen peroxide catabolic process"/>
    <property type="evidence" value="ECO:0007669"/>
    <property type="project" value="TreeGrafter"/>
</dbReference>
<dbReference type="CDD" id="cd08927">
    <property type="entry name" value="Hb-alpha-like"/>
    <property type="match status" value="1"/>
</dbReference>
<dbReference type="FunFam" id="1.10.490.10:FF:000002">
    <property type="entry name" value="Hemoglobin subunit alpha"/>
    <property type="match status" value="1"/>
</dbReference>
<dbReference type="Gene3D" id="1.10.490.10">
    <property type="entry name" value="Globins"/>
    <property type="match status" value="1"/>
</dbReference>
<dbReference type="InterPro" id="IPR000971">
    <property type="entry name" value="Globin"/>
</dbReference>
<dbReference type="InterPro" id="IPR009050">
    <property type="entry name" value="Globin-like_sf"/>
</dbReference>
<dbReference type="InterPro" id="IPR012292">
    <property type="entry name" value="Globin/Proto"/>
</dbReference>
<dbReference type="InterPro" id="IPR002338">
    <property type="entry name" value="Hemoglobin_a-typ"/>
</dbReference>
<dbReference type="InterPro" id="IPR050056">
    <property type="entry name" value="Hemoglobin_oxygen_transport"/>
</dbReference>
<dbReference type="InterPro" id="IPR002339">
    <property type="entry name" value="Hemoglobin_pi"/>
</dbReference>
<dbReference type="PANTHER" id="PTHR11442">
    <property type="entry name" value="HEMOGLOBIN FAMILY MEMBER"/>
    <property type="match status" value="1"/>
</dbReference>
<dbReference type="PANTHER" id="PTHR11442:SF41">
    <property type="entry name" value="HEMOGLOBIN SUBUNIT ZETA"/>
    <property type="match status" value="1"/>
</dbReference>
<dbReference type="Pfam" id="PF00042">
    <property type="entry name" value="Globin"/>
    <property type="match status" value="1"/>
</dbReference>
<dbReference type="PRINTS" id="PR00612">
    <property type="entry name" value="ALPHAHAEM"/>
</dbReference>
<dbReference type="PRINTS" id="PR00815">
    <property type="entry name" value="PIHAEM"/>
</dbReference>
<dbReference type="SUPFAM" id="SSF46458">
    <property type="entry name" value="Globin-like"/>
    <property type="match status" value="1"/>
</dbReference>
<dbReference type="PROSITE" id="PS01033">
    <property type="entry name" value="GLOBIN"/>
    <property type="match status" value="1"/>
</dbReference>
<organism>
    <name type="scientific">Notothenia angustata</name>
    <name type="common">Rockcod</name>
    <dbReference type="NCBI Taxonomy" id="8210"/>
    <lineage>
        <taxon>Eukaryota</taxon>
        <taxon>Metazoa</taxon>
        <taxon>Chordata</taxon>
        <taxon>Craniata</taxon>
        <taxon>Vertebrata</taxon>
        <taxon>Euteleostomi</taxon>
        <taxon>Actinopterygii</taxon>
        <taxon>Neopterygii</taxon>
        <taxon>Teleostei</taxon>
        <taxon>Neoteleostei</taxon>
        <taxon>Acanthomorphata</taxon>
        <taxon>Eupercaria</taxon>
        <taxon>Perciformes</taxon>
        <taxon>Notothenioidei</taxon>
        <taxon>Nototheniidae</taxon>
        <taxon>Notothenia</taxon>
    </lineage>
</organism>
<accession>P29624</accession>
<sequence length="142" mass="15504">SLSDKDKAAVRALWSKIGKSADAIGNDALSRMIVVYPQTKTYFSHWPDVTPGSAHIKAHGKKVMGGIALAVSKIDDLKAGLSDLSEQHAYKLRVDPANFKILNHCILVVISTMFPKDFTPEAHVSLDKFLSGVALALAERYR</sequence>
<keyword id="KW-0007">Acetylation</keyword>
<keyword id="KW-0903">Direct protein sequencing</keyword>
<keyword id="KW-0349">Heme</keyword>
<keyword id="KW-0408">Iron</keyword>
<keyword id="KW-0479">Metal-binding</keyword>
<keyword id="KW-0561">Oxygen transport</keyword>
<keyword id="KW-0813">Transport</keyword>
<comment type="function">
    <text>Involved in oxygen transport from gills to the various peripheral tissues.</text>
</comment>
<comment type="subunit">
    <text>Hb1 is a heterotetramer of two alpha-2 chains and two beta chains, while Hb2 is a heterotetramer of two alpha-2 chains and two beta chains.</text>
</comment>
<comment type="tissue specificity">
    <text>Red blood cells.</text>
</comment>
<comment type="miscellaneous">
    <text>This fish has two hemoglobins: Hb1 and Hb2.</text>
</comment>
<comment type="similarity">
    <text evidence="2">Belongs to the globin family.</text>
</comment>
<feature type="chain" id="PRO_0000052702" description="Hemoglobin subunit alpha-1">
    <location>
        <begin position="1"/>
        <end position="142"/>
    </location>
</feature>
<feature type="domain" description="Globin" evidence="2">
    <location>
        <begin position="1"/>
        <end position="142"/>
    </location>
</feature>
<feature type="binding site" evidence="2">
    <location>
        <position position="59"/>
    </location>
    <ligand>
        <name>O2</name>
        <dbReference type="ChEBI" id="CHEBI:15379"/>
    </ligand>
</feature>
<feature type="binding site" description="proximal binding residue" evidence="2">
    <location>
        <position position="88"/>
    </location>
    <ligand>
        <name>heme b</name>
        <dbReference type="ChEBI" id="CHEBI:60344"/>
    </ligand>
    <ligandPart>
        <name>Fe</name>
        <dbReference type="ChEBI" id="CHEBI:18248"/>
    </ligandPart>
</feature>
<feature type="modified residue" description="N-acetylserine" evidence="1">
    <location>
        <position position="1"/>
    </location>
</feature>
<name>HBA1_NOTAN</name>
<protein>
    <recommendedName>
        <fullName>Hemoglobin subunit alpha-1</fullName>
    </recommendedName>
    <alternativeName>
        <fullName>Alpha-1-globin</fullName>
    </alternativeName>
    <alternativeName>
        <fullName>Hemoglobin alpha-1 chain</fullName>
    </alternativeName>
</protein>
<reference key="1">
    <citation type="journal article" date="1992" name="Eur. J. Biochem.">
        <title>The hemoglobins of Notothenia angustata, a temperate fish belonging to a family largely endemic to the Antarctic Ocean.</title>
        <authorList>
            <person name="Fago A."/>
            <person name="D'Avino R."/>
            <person name="di Prisco G."/>
        </authorList>
    </citation>
    <scope>PROTEIN SEQUENCE</scope>
</reference>
<evidence type="ECO:0000250" key="1">
    <source>
        <dbReference type="UniProtKB" id="P10777"/>
    </source>
</evidence>
<evidence type="ECO:0000255" key="2">
    <source>
        <dbReference type="PROSITE-ProRule" id="PRU00238"/>
    </source>
</evidence>
<gene>
    <name type="primary">hba1</name>
</gene>